<sequence length="199" mass="22206">MPHKRRNRVHANQRNFTARRVSVAKLSSAPPNVLVESCNGSHADNSSPDSPKAKEGAMTNGKNPEIKLAVPKCNTTVRKQNEAHIISNIKLDMNLNKDSNFIAPQITKKMNFAPNRVVFGVLVPLNVNDSVLVPHNRKPDALKHTSKESESCKAISEPQLADYAEKVDPMIMAVKEPVLHLDWEPGPFDFFGAYRRTYN</sequence>
<gene>
    <name evidence="4" type="primary">Rcd4</name>
    <name evidence="4" type="ORF">CG17295</name>
</gene>
<reference key="1">
    <citation type="journal article" date="2000" name="Science">
        <title>The genome sequence of Drosophila melanogaster.</title>
        <authorList>
            <person name="Adams M.D."/>
            <person name="Celniker S.E."/>
            <person name="Holt R.A."/>
            <person name="Evans C.A."/>
            <person name="Gocayne J.D."/>
            <person name="Amanatides P.G."/>
            <person name="Scherer S.E."/>
            <person name="Li P.W."/>
            <person name="Hoskins R.A."/>
            <person name="Galle R.F."/>
            <person name="George R.A."/>
            <person name="Lewis S.E."/>
            <person name="Richards S."/>
            <person name="Ashburner M."/>
            <person name="Henderson S.N."/>
            <person name="Sutton G.G."/>
            <person name="Wortman J.R."/>
            <person name="Yandell M.D."/>
            <person name="Zhang Q."/>
            <person name="Chen L.X."/>
            <person name="Brandon R.C."/>
            <person name="Rogers Y.-H.C."/>
            <person name="Blazej R.G."/>
            <person name="Champe M."/>
            <person name="Pfeiffer B.D."/>
            <person name="Wan K.H."/>
            <person name="Doyle C."/>
            <person name="Baxter E.G."/>
            <person name="Helt G."/>
            <person name="Nelson C.R."/>
            <person name="Miklos G.L.G."/>
            <person name="Abril J.F."/>
            <person name="Agbayani A."/>
            <person name="An H.-J."/>
            <person name="Andrews-Pfannkoch C."/>
            <person name="Baldwin D."/>
            <person name="Ballew R.M."/>
            <person name="Basu A."/>
            <person name="Baxendale J."/>
            <person name="Bayraktaroglu L."/>
            <person name="Beasley E.M."/>
            <person name="Beeson K.Y."/>
            <person name="Benos P.V."/>
            <person name="Berman B.P."/>
            <person name="Bhandari D."/>
            <person name="Bolshakov S."/>
            <person name="Borkova D."/>
            <person name="Botchan M.R."/>
            <person name="Bouck J."/>
            <person name="Brokstein P."/>
            <person name="Brottier P."/>
            <person name="Burtis K.C."/>
            <person name="Busam D.A."/>
            <person name="Butler H."/>
            <person name="Cadieu E."/>
            <person name="Center A."/>
            <person name="Chandra I."/>
            <person name="Cherry J.M."/>
            <person name="Cawley S."/>
            <person name="Dahlke C."/>
            <person name="Davenport L.B."/>
            <person name="Davies P."/>
            <person name="de Pablos B."/>
            <person name="Delcher A."/>
            <person name="Deng Z."/>
            <person name="Mays A.D."/>
            <person name="Dew I."/>
            <person name="Dietz S.M."/>
            <person name="Dodson K."/>
            <person name="Doup L.E."/>
            <person name="Downes M."/>
            <person name="Dugan-Rocha S."/>
            <person name="Dunkov B.C."/>
            <person name="Dunn P."/>
            <person name="Durbin K.J."/>
            <person name="Evangelista C.C."/>
            <person name="Ferraz C."/>
            <person name="Ferriera S."/>
            <person name="Fleischmann W."/>
            <person name="Fosler C."/>
            <person name="Gabrielian A.E."/>
            <person name="Garg N.S."/>
            <person name="Gelbart W.M."/>
            <person name="Glasser K."/>
            <person name="Glodek A."/>
            <person name="Gong F."/>
            <person name="Gorrell J.H."/>
            <person name="Gu Z."/>
            <person name="Guan P."/>
            <person name="Harris M."/>
            <person name="Harris N.L."/>
            <person name="Harvey D.A."/>
            <person name="Heiman T.J."/>
            <person name="Hernandez J.R."/>
            <person name="Houck J."/>
            <person name="Hostin D."/>
            <person name="Houston K.A."/>
            <person name="Howland T.J."/>
            <person name="Wei M.-H."/>
            <person name="Ibegwam C."/>
            <person name="Jalali M."/>
            <person name="Kalush F."/>
            <person name="Karpen G.H."/>
            <person name="Ke Z."/>
            <person name="Kennison J.A."/>
            <person name="Ketchum K.A."/>
            <person name="Kimmel B.E."/>
            <person name="Kodira C.D."/>
            <person name="Kraft C.L."/>
            <person name="Kravitz S."/>
            <person name="Kulp D."/>
            <person name="Lai Z."/>
            <person name="Lasko P."/>
            <person name="Lei Y."/>
            <person name="Levitsky A.A."/>
            <person name="Li J.H."/>
            <person name="Li Z."/>
            <person name="Liang Y."/>
            <person name="Lin X."/>
            <person name="Liu X."/>
            <person name="Mattei B."/>
            <person name="McIntosh T.C."/>
            <person name="McLeod M.P."/>
            <person name="McPherson D."/>
            <person name="Merkulov G."/>
            <person name="Milshina N.V."/>
            <person name="Mobarry C."/>
            <person name="Morris J."/>
            <person name="Moshrefi A."/>
            <person name="Mount S.M."/>
            <person name="Moy M."/>
            <person name="Murphy B."/>
            <person name="Murphy L."/>
            <person name="Muzny D.M."/>
            <person name="Nelson D.L."/>
            <person name="Nelson D.R."/>
            <person name="Nelson K.A."/>
            <person name="Nixon K."/>
            <person name="Nusskern D.R."/>
            <person name="Pacleb J.M."/>
            <person name="Palazzolo M."/>
            <person name="Pittman G.S."/>
            <person name="Pan S."/>
            <person name="Pollard J."/>
            <person name="Puri V."/>
            <person name="Reese M.G."/>
            <person name="Reinert K."/>
            <person name="Remington K."/>
            <person name="Saunders R.D.C."/>
            <person name="Scheeler F."/>
            <person name="Shen H."/>
            <person name="Shue B.C."/>
            <person name="Siden-Kiamos I."/>
            <person name="Simpson M."/>
            <person name="Skupski M.P."/>
            <person name="Smith T.J."/>
            <person name="Spier E."/>
            <person name="Spradling A.C."/>
            <person name="Stapleton M."/>
            <person name="Strong R."/>
            <person name="Sun E."/>
            <person name="Svirskas R."/>
            <person name="Tector C."/>
            <person name="Turner R."/>
            <person name="Venter E."/>
            <person name="Wang A.H."/>
            <person name="Wang X."/>
            <person name="Wang Z.-Y."/>
            <person name="Wassarman D.A."/>
            <person name="Weinstock G.M."/>
            <person name="Weissenbach J."/>
            <person name="Williams S.M."/>
            <person name="Woodage T."/>
            <person name="Worley K.C."/>
            <person name="Wu D."/>
            <person name="Yang S."/>
            <person name="Yao Q.A."/>
            <person name="Ye J."/>
            <person name="Yeh R.-F."/>
            <person name="Zaveri J.S."/>
            <person name="Zhan M."/>
            <person name="Zhang G."/>
            <person name="Zhao Q."/>
            <person name="Zheng L."/>
            <person name="Zheng X.H."/>
            <person name="Zhong F.N."/>
            <person name="Zhong W."/>
            <person name="Zhou X."/>
            <person name="Zhu S.C."/>
            <person name="Zhu X."/>
            <person name="Smith H.O."/>
            <person name="Gibbs R.A."/>
            <person name="Myers E.W."/>
            <person name="Rubin G.M."/>
            <person name="Venter J.C."/>
        </authorList>
    </citation>
    <scope>NUCLEOTIDE SEQUENCE [LARGE SCALE GENOMIC DNA]</scope>
    <source>
        <strain>Berkeley</strain>
    </source>
</reference>
<reference key="2">
    <citation type="journal article" date="2002" name="Genome Biol.">
        <title>Annotation of the Drosophila melanogaster euchromatic genome: a systematic review.</title>
        <authorList>
            <person name="Misra S."/>
            <person name="Crosby M.A."/>
            <person name="Mungall C.J."/>
            <person name="Matthews B.B."/>
            <person name="Campbell K.S."/>
            <person name="Hradecky P."/>
            <person name="Huang Y."/>
            <person name="Kaminker J.S."/>
            <person name="Millburn G.H."/>
            <person name="Prochnik S.E."/>
            <person name="Smith C.D."/>
            <person name="Tupy J.L."/>
            <person name="Whitfield E.J."/>
            <person name="Bayraktaroglu L."/>
            <person name="Berman B.P."/>
            <person name="Bettencourt B.R."/>
            <person name="Celniker S.E."/>
            <person name="de Grey A.D.N.J."/>
            <person name="Drysdale R.A."/>
            <person name="Harris N.L."/>
            <person name="Richter J."/>
            <person name="Russo S."/>
            <person name="Schroeder A.J."/>
            <person name="Shu S.Q."/>
            <person name="Stapleton M."/>
            <person name="Yamada C."/>
            <person name="Ashburner M."/>
            <person name="Gelbart W.M."/>
            <person name="Rubin G.M."/>
            <person name="Lewis S.E."/>
        </authorList>
    </citation>
    <scope>GENOME REANNOTATION</scope>
    <source>
        <strain>Berkeley</strain>
    </source>
</reference>
<reference key="3">
    <citation type="submission" date="2002-06" db="EMBL/GenBank/DDBJ databases">
        <authorList>
            <person name="Stapleton M."/>
            <person name="Brokstein P."/>
            <person name="Hong L."/>
            <person name="Agbayani A."/>
            <person name="Carlson J."/>
            <person name="Champe M."/>
            <person name="Chavez C."/>
            <person name="Dorsett V."/>
            <person name="Dresnek D."/>
            <person name="Farfan D."/>
            <person name="Frise E."/>
            <person name="George R."/>
            <person name="Gonzalez M."/>
            <person name="Guarin H."/>
            <person name="Kronmiller B."/>
            <person name="Li P."/>
            <person name="Liao G."/>
            <person name="Miranda A."/>
            <person name="Mungall C.J."/>
            <person name="Nunoo J."/>
            <person name="Pacleb J."/>
            <person name="Paragas V."/>
            <person name="Park S."/>
            <person name="Patel S."/>
            <person name="Phouanenavong S."/>
            <person name="Wan K."/>
            <person name="Yu C."/>
            <person name="Lewis S.E."/>
            <person name="Rubin G.M."/>
            <person name="Celniker S."/>
        </authorList>
    </citation>
    <scope>NUCLEOTIDE SEQUENCE [LARGE SCALE MRNA]</scope>
</reference>
<reference key="4">
    <citation type="journal article" date="2020" name="J. Cell Biol.">
        <title>Tissue specific requirement of Drosophila Rcd4 for centriole duplication and ciliogenesis.</title>
        <authorList>
            <person name="Panda P."/>
            <person name="Kovacs L."/>
            <person name="Dzhindzhev N."/>
            <person name="Fatalska A."/>
            <person name="Persico V."/>
            <person name="Geymonat M."/>
            <person name="Riparbelli M.G."/>
            <person name="Callaini G."/>
            <person name="Glover D.M."/>
        </authorList>
    </citation>
    <scope>DISRUPTION PHENOTYPE</scope>
    <scope>FUNCTION</scope>
    <scope>SUBCELLULAR LOCATION</scope>
    <scope>INTERACTION WITH ANA3</scope>
</reference>
<keyword id="KW-0963">Cytoplasm</keyword>
<keyword id="KW-0206">Cytoskeleton</keyword>
<keyword id="KW-1185">Reference proteome</keyword>
<evidence type="ECO:0000256" key="1">
    <source>
        <dbReference type="SAM" id="MobiDB-lite"/>
    </source>
</evidence>
<evidence type="ECO:0000269" key="2">
    <source>
    </source>
</evidence>
<evidence type="ECO:0000305" key="3"/>
<evidence type="ECO:0000312" key="4">
    <source>
        <dbReference type="FlyBase" id="FBgn0032034"/>
    </source>
</evidence>
<feature type="chain" id="PRO_0000454386" description="Protein PPP1R35 homolog">
    <location>
        <begin position="1"/>
        <end position="199"/>
    </location>
</feature>
<feature type="region of interest" description="Disordered" evidence="1">
    <location>
        <begin position="1"/>
        <end position="23"/>
    </location>
</feature>
<feature type="region of interest" description="Disordered" evidence="1">
    <location>
        <begin position="36"/>
        <end position="60"/>
    </location>
</feature>
<feature type="compositionally biased region" description="Basic residues" evidence="1">
    <location>
        <begin position="1"/>
        <end position="11"/>
    </location>
</feature>
<feature type="compositionally biased region" description="Polar residues" evidence="1">
    <location>
        <begin position="38"/>
        <end position="49"/>
    </location>
</feature>
<comment type="function">
    <text evidence="2">Participates in the later stages of centriole assembly through the interaction with Ana3 leading to the centriole to centrosome conversion in somatic cells.</text>
</comment>
<comment type="subunit">
    <text evidence="2">Interacts with Ana3; this complex is recruited to daughter centrioles before their conversion to centrosomes.</text>
</comment>
<comment type="subcellular location">
    <subcellularLocation>
        <location evidence="2">Cytoplasm</location>
        <location evidence="2">Cytoskeleton</location>
        <location evidence="2">Microtubule organizing center</location>
        <location evidence="2">Centrosome</location>
        <location evidence="2">Centriole</location>
    </subcellularLocation>
    <text evidence="2">Localizes to the more distal part of the lumen of the centriole. Recruited into zone I during interphase after the formation of the cartwheel at the end of mitosis (PubMed:32543652). The Rcd4 recruitment to the daughter centriole is dependent on Ana3 (PubMed:32543652).</text>
</comment>
<comment type="disruption phenotype">
    <text evidence="2">Homozygous flies for rcd4 are lethal at the late pupal and adult stages. The flies that emerged are slow and uncoordinated. Female mutant flies are sterile. Male mutants are fertile.</text>
</comment>
<comment type="similarity">
    <text evidence="3">Belongs to the PPP1R35 family.</text>
</comment>
<organism>
    <name type="scientific">Drosophila melanogaster</name>
    <name type="common">Fruit fly</name>
    <dbReference type="NCBI Taxonomy" id="7227"/>
    <lineage>
        <taxon>Eukaryota</taxon>
        <taxon>Metazoa</taxon>
        <taxon>Ecdysozoa</taxon>
        <taxon>Arthropoda</taxon>
        <taxon>Hexapoda</taxon>
        <taxon>Insecta</taxon>
        <taxon>Pterygota</taxon>
        <taxon>Neoptera</taxon>
        <taxon>Endopterygota</taxon>
        <taxon>Diptera</taxon>
        <taxon>Brachycera</taxon>
        <taxon>Muscomorpha</taxon>
        <taxon>Ephydroidea</taxon>
        <taxon>Drosophilidae</taxon>
        <taxon>Drosophila</taxon>
        <taxon>Sophophora</taxon>
    </lineage>
</organism>
<name>PPR35_DROME</name>
<dbReference type="EMBL" id="AE014134">
    <property type="protein sequence ID" value="AAF52659.1"/>
    <property type="molecule type" value="Genomic_DNA"/>
</dbReference>
<dbReference type="EMBL" id="AE014134">
    <property type="protein sequence ID" value="ADV36972.1"/>
    <property type="molecule type" value="Genomic_DNA"/>
</dbReference>
<dbReference type="EMBL" id="AY119223">
    <property type="protein sequence ID" value="AAM51083.1"/>
    <property type="molecule type" value="mRNA"/>
</dbReference>
<dbReference type="RefSeq" id="NP_001188722.1">
    <property type="nucleotide sequence ID" value="NM_001201793.1"/>
</dbReference>
<dbReference type="RefSeq" id="NP_609221.1">
    <property type="nucleotide sequence ID" value="NM_135377.3"/>
</dbReference>
<dbReference type="FunCoup" id="Q9VLM6">
    <property type="interactions" value="25"/>
</dbReference>
<dbReference type="STRING" id="7227.FBpp0079268"/>
<dbReference type="PaxDb" id="7227-FBpp0079268"/>
<dbReference type="DNASU" id="34158"/>
<dbReference type="EnsemblMetazoa" id="FBtr0079652">
    <property type="protein sequence ID" value="FBpp0079268"/>
    <property type="gene ID" value="FBgn0032034"/>
</dbReference>
<dbReference type="EnsemblMetazoa" id="FBtr0303472">
    <property type="protein sequence ID" value="FBpp0292524"/>
    <property type="gene ID" value="FBgn0032034"/>
</dbReference>
<dbReference type="GeneID" id="34158"/>
<dbReference type="KEGG" id="dme:Dmel_CG17295"/>
<dbReference type="UCSC" id="CG17295-RA">
    <property type="organism name" value="d. melanogaster"/>
</dbReference>
<dbReference type="AGR" id="FB:FBgn0032034"/>
<dbReference type="CTD" id="34158"/>
<dbReference type="FlyBase" id="FBgn0032034">
    <property type="gene designation" value="Rcd4"/>
</dbReference>
<dbReference type="VEuPathDB" id="VectorBase:FBgn0032034"/>
<dbReference type="eggNOG" id="ENOG502TB9M">
    <property type="taxonomic scope" value="Eukaryota"/>
</dbReference>
<dbReference type="HOGENOM" id="CLU_1306049_0_0_1"/>
<dbReference type="InParanoid" id="Q9VLM6"/>
<dbReference type="OMA" id="EDYVQPI"/>
<dbReference type="OrthoDB" id="8191506at2759"/>
<dbReference type="PhylomeDB" id="Q9VLM6"/>
<dbReference type="BioGRID-ORCS" id="34158">
    <property type="hits" value="0 hits in 1 CRISPR screen"/>
</dbReference>
<dbReference type="GenomeRNAi" id="34158"/>
<dbReference type="PRO" id="PR:Q9VLM6"/>
<dbReference type="Proteomes" id="UP000000803">
    <property type="component" value="Chromosome 2L"/>
</dbReference>
<dbReference type="Bgee" id="FBgn0032034">
    <property type="expression patterns" value="Expressed in secondary oocyte and 56 other cell types or tissues"/>
</dbReference>
<dbReference type="GO" id="GO:0005814">
    <property type="term" value="C:centriole"/>
    <property type="evidence" value="ECO:0000314"/>
    <property type="project" value="UniProtKB"/>
</dbReference>
<dbReference type="GO" id="GO:0005737">
    <property type="term" value="C:cytoplasm"/>
    <property type="evidence" value="ECO:0007669"/>
    <property type="project" value="UniProtKB-KW"/>
</dbReference>
<dbReference type="GO" id="GO:0098534">
    <property type="term" value="P:centriole assembly"/>
    <property type="evidence" value="ECO:0000315"/>
    <property type="project" value="UniProtKB"/>
</dbReference>
<dbReference type="GO" id="GO:0007099">
    <property type="term" value="P:centriole replication"/>
    <property type="evidence" value="ECO:0000315"/>
    <property type="project" value="FlyBase"/>
</dbReference>
<dbReference type="InterPro" id="IPR029135">
    <property type="entry name" value="PPP1R35_C"/>
</dbReference>
<dbReference type="Pfam" id="PF15503">
    <property type="entry name" value="PPP1R35_C"/>
    <property type="match status" value="1"/>
</dbReference>
<accession>Q9VLM6</accession>
<proteinExistence type="evidence at protein level"/>
<protein>
    <recommendedName>
        <fullName evidence="3">Protein PPP1R35 homolog</fullName>
    </recommendedName>
    <alternativeName>
        <fullName evidence="3">Protein Rcd4</fullName>
    </alternativeName>
    <alternativeName>
        <fullName evidence="4">Reduction in Cnn dots 4 protein</fullName>
    </alternativeName>
</protein>